<reference key="1">
    <citation type="journal article" date="2005" name="Int. J. Primatol.">
        <title>Biogeography of dwarf lemurs: genetic evidence for unexpected patterns in southeastern Madagascar.</title>
        <authorList>
            <person name="Hapke A."/>
            <person name="Fietz J."/>
            <person name="Nash S.D."/>
            <person name="Rakotondravony D."/>
            <person name="Rakotosamimanana B."/>
            <person name="Ramanamanjato J.-B."/>
            <person name="Randria G.F.N."/>
            <person name="Zischler H."/>
        </authorList>
    </citation>
    <scope>NUCLEOTIDE SEQUENCE [GENOMIC DNA]</scope>
</reference>
<protein>
    <recommendedName>
        <fullName>Cytochrome b</fullName>
    </recommendedName>
    <alternativeName>
        <fullName>Complex III subunit 3</fullName>
    </alternativeName>
    <alternativeName>
        <fullName>Complex III subunit III</fullName>
    </alternativeName>
    <alternativeName>
        <fullName>Cytochrome b-c1 complex subunit 3</fullName>
    </alternativeName>
    <alternativeName>
        <fullName>Ubiquinol-cytochrome-c reductase complex cytochrome b subunit</fullName>
    </alternativeName>
</protein>
<accession>Q539Z1</accession>
<comment type="function">
    <text evidence="2">Component of the ubiquinol-cytochrome c reductase complex (complex III or cytochrome b-c1 complex) that is part of the mitochondrial respiratory chain. The b-c1 complex mediates electron transfer from ubiquinol to cytochrome c. Contributes to the generation of a proton gradient across the mitochondrial membrane that is then used for ATP synthesis.</text>
</comment>
<comment type="cofactor">
    <cofactor evidence="2">
        <name>heme b</name>
        <dbReference type="ChEBI" id="CHEBI:60344"/>
    </cofactor>
    <text evidence="2">Binds 2 heme b groups non-covalently.</text>
</comment>
<comment type="subunit">
    <text evidence="2">The cytochrome bc1 complex contains 11 subunits: 3 respiratory subunits (MT-CYB, CYC1 and UQCRFS1), 2 core proteins (UQCRC1 and UQCRC2) and 6 low-molecular weight proteins (UQCRH/QCR6, UQCRB/QCR7, UQCRQ/QCR8, UQCR10/QCR9, UQCR11/QCR10 and a cleavage product of UQCRFS1). This cytochrome bc1 complex then forms a dimer.</text>
</comment>
<comment type="subcellular location">
    <subcellularLocation>
        <location evidence="2">Mitochondrion inner membrane</location>
        <topology evidence="2">Multi-pass membrane protein</topology>
    </subcellularLocation>
</comment>
<comment type="miscellaneous">
    <text evidence="1">Heme 1 (or BL or b562) is low-potential and absorbs at about 562 nm, and heme 2 (or BH or b566) is high-potential and absorbs at about 566 nm.</text>
</comment>
<comment type="similarity">
    <text evidence="3 4">Belongs to the cytochrome b family.</text>
</comment>
<comment type="caution">
    <text evidence="2">The full-length protein contains only eight transmembrane helices, not nine as predicted by bioinformatics tools.</text>
</comment>
<sequence>MTNIRKTHPLMKIMNSSFIDLPAPSNISSWWNFGSLLGACLAIQIITGLFLAMHYTADTTTAFSSVTHICRDVNHGWIIRYLHANGASMFFLCLFIHVGRGMYYGSFTMSETWNIGIILLFTVMATAFMGYVLPWGQMSFWGATVITNLLSAIPYIGTILVEWIWGGFSVDKATLTRFFAFHFILPFVITALVMVHLLFLHETGSNNPLGTSSDSDKIPFHPYYTIKDLLGLLFLLILLMVLVFFSPDLLGDPDNYTPANPLSTPPHIKPEWYFLFAYAILRSIPNKLGGVLALVLSILILAIIPMLQTTKQRSMMFRPLSQILFWVLTADLFILTWIGGQPVEHPFITIGQMASILYFSLILIIMPTVSLMENKMLKW</sequence>
<dbReference type="EMBL" id="AY605927">
    <property type="protein sequence ID" value="AAU06571.1"/>
    <property type="molecule type" value="Genomic_DNA"/>
</dbReference>
<dbReference type="SMR" id="Q539Z1"/>
<dbReference type="GO" id="GO:0005743">
    <property type="term" value="C:mitochondrial inner membrane"/>
    <property type="evidence" value="ECO:0007669"/>
    <property type="project" value="UniProtKB-SubCell"/>
</dbReference>
<dbReference type="GO" id="GO:0045275">
    <property type="term" value="C:respiratory chain complex III"/>
    <property type="evidence" value="ECO:0007669"/>
    <property type="project" value="InterPro"/>
</dbReference>
<dbReference type="GO" id="GO:0046872">
    <property type="term" value="F:metal ion binding"/>
    <property type="evidence" value="ECO:0007669"/>
    <property type="project" value="UniProtKB-KW"/>
</dbReference>
<dbReference type="GO" id="GO:0008121">
    <property type="term" value="F:ubiquinol-cytochrome-c reductase activity"/>
    <property type="evidence" value="ECO:0007669"/>
    <property type="project" value="InterPro"/>
</dbReference>
<dbReference type="GO" id="GO:0006122">
    <property type="term" value="P:mitochondrial electron transport, ubiquinol to cytochrome c"/>
    <property type="evidence" value="ECO:0007669"/>
    <property type="project" value="TreeGrafter"/>
</dbReference>
<dbReference type="CDD" id="cd00290">
    <property type="entry name" value="cytochrome_b_C"/>
    <property type="match status" value="1"/>
</dbReference>
<dbReference type="CDD" id="cd00284">
    <property type="entry name" value="Cytochrome_b_N"/>
    <property type="match status" value="1"/>
</dbReference>
<dbReference type="FunFam" id="1.20.810.10:FF:000002">
    <property type="entry name" value="Cytochrome b"/>
    <property type="match status" value="1"/>
</dbReference>
<dbReference type="Gene3D" id="1.20.810.10">
    <property type="entry name" value="Cytochrome Bc1 Complex, Chain C"/>
    <property type="match status" value="1"/>
</dbReference>
<dbReference type="InterPro" id="IPR005798">
    <property type="entry name" value="Cyt_b/b6_C"/>
</dbReference>
<dbReference type="InterPro" id="IPR036150">
    <property type="entry name" value="Cyt_b/b6_C_sf"/>
</dbReference>
<dbReference type="InterPro" id="IPR005797">
    <property type="entry name" value="Cyt_b/b6_N"/>
</dbReference>
<dbReference type="InterPro" id="IPR027387">
    <property type="entry name" value="Cytb/b6-like_sf"/>
</dbReference>
<dbReference type="InterPro" id="IPR030689">
    <property type="entry name" value="Cytochrome_b"/>
</dbReference>
<dbReference type="InterPro" id="IPR048260">
    <property type="entry name" value="Cytochrome_b_C_euk/bac"/>
</dbReference>
<dbReference type="InterPro" id="IPR048259">
    <property type="entry name" value="Cytochrome_b_N_euk/bac"/>
</dbReference>
<dbReference type="InterPro" id="IPR016174">
    <property type="entry name" value="Di-haem_cyt_TM"/>
</dbReference>
<dbReference type="PANTHER" id="PTHR19271">
    <property type="entry name" value="CYTOCHROME B"/>
    <property type="match status" value="1"/>
</dbReference>
<dbReference type="PANTHER" id="PTHR19271:SF16">
    <property type="entry name" value="CYTOCHROME B"/>
    <property type="match status" value="1"/>
</dbReference>
<dbReference type="Pfam" id="PF00032">
    <property type="entry name" value="Cytochrom_B_C"/>
    <property type="match status" value="1"/>
</dbReference>
<dbReference type="Pfam" id="PF00033">
    <property type="entry name" value="Cytochrome_B"/>
    <property type="match status" value="1"/>
</dbReference>
<dbReference type="PIRSF" id="PIRSF038885">
    <property type="entry name" value="COB"/>
    <property type="match status" value="1"/>
</dbReference>
<dbReference type="SUPFAM" id="SSF81648">
    <property type="entry name" value="a domain/subunit of cytochrome bc1 complex (Ubiquinol-cytochrome c reductase)"/>
    <property type="match status" value="1"/>
</dbReference>
<dbReference type="SUPFAM" id="SSF81342">
    <property type="entry name" value="Transmembrane di-heme cytochromes"/>
    <property type="match status" value="1"/>
</dbReference>
<dbReference type="PROSITE" id="PS51003">
    <property type="entry name" value="CYTB_CTER"/>
    <property type="match status" value="1"/>
</dbReference>
<dbReference type="PROSITE" id="PS51002">
    <property type="entry name" value="CYTB_NTER"/>
    <property type="match status" value="1"/>
</dbReference>
<keyword id="KW-0249">Electron transport</keyword>
<keyword id="KW-0349">Heme</keyword>
<keyword id="KW-0408">Iron</keyword>
<keyword id="KW-0472">Membrane</keyword>
<keyword id="KW-0479">Metal-binding</keyword>
<keyword id="KW-0496">Mitochondrion</keyword>
<keyword id="KW-0999">Mitochondrion inner membrane</keyword>
<keyword id="KW-0679">Respiratory chain</keyword>
<keyword id="KW-0812">Transmembrane</keyword>
<keyword id="KW-1133">Transmembrane helix</keyword>
<keyword id="KW-0813">Transport</keyword>
<keyword id="KW-0830">Ubiquinone</keyword>
<organism>
    <name type="scientific">Cheirogaleus crossleyi</name>
    <name type="common">Furry-eared dwarf lemur</name>
    <dbReference type="NCBI Taxonomy" id="291259"/>
    <lineage>
        <taxon>Eukaryota</taxon>
        <taxon>Metazoa</taxon>
        <taxon>Chordata</taxon>
        <taxon>Craniata</taxon>
        <taxon>Vertebrata</taxon>
        <taxon>Euteleostomi</taxon>
        <taxon>Mammalia</taxon>
        <taxon>Eutheria</taxon>
        <taxon>Euarchontoglires</taxon>
        <taxon>Primates</taxon>
        <taxon>Strepsirrhini</taxon>
        <taxon>Lemuriformes</taxon>
        <taxon>Cheirogaleidae</taxon>
        <taxon>Cheirogaleus</taxon>
    </lineage>
</organism>
<evidence type="ECO:0000250" key="1"/>
<evidence type="ECO:0000250" key="2">
    <source>
        <dbReference type="UniProtKB" id="P00157"/>
    </source>
</evidence>
<evidence type="ECO:0000255" key="3">
    <source>
        <dbReference type="PROSITE-ProRule" id="PRU00967"/>
    </source>
</evidence>
<evidence type="ECO:0000255" key="4">
    <source>
        <dbReference type="PROSITE-ProRule" id="PRU00968"/>
    </source>
</evidence>
<gene>
    <name type="primary">MT-CYB</name>
    <name type="synonym">COB</name>
    <name type="synonym">CYTB</name>
    <name type="synonym">MTCYB</name>
</gene>
<feature type="chain" id="PRO_0000060772" description="Cytochrome b">
    <location>
        <begin position="1"/>
        <end position="379"/>
    </location>
</feature>
<feature type="transmembrane region" description="Helical" evidence="2">
    <location>
        <begin position="33"/>
        <end position="53"/>
    </location>
</feature>
<feature type="transmembrane region" description="Helical" evidence="2">
    <location>
        <begin position="77"/>
        <end position="98"/>
    </location>
</feature>
<feature type="transmembrane region" description="Helical" evidence="2">
    <location>
        <begin position="113"/>
        <end position="133"/>
    </location>
</feature>
<feature type="transmembrane region" description="Helical" evidence="2">
    <location>
        <begin position="178"/>
        <end position="198"/>
    </location>
</feature>
<feature type="transmembrane region" description="Helical" evidence="2">
    <location>
        <begin position="226"/>
        <end position="246"/>
    </location>
</feature>
<feature type="transmembrane region" description="Helical" evidence="2">
    <location>
        <begin position="288"/>
        <end position="308"/>
    </location>
</feature>
<feature type="transmembrane region" description="Helical" evidence="2">
    <location>
        <begin position="320"/>
        <end position="340"/>
    </location>
</feature>
<feature type="transmembrane region" description="Helical" evidence="2">
    <location>
        <begin position="347"/>
        <end position="367"/>
    </location>
</feature>
<feature type="binding site" description="axial binding residue" evidence="2">
    <location>
        <position position="83"/>
    </location>
    <ligand>
        <name>heme b</name>
        <dbReference type="ChEBI" id="CHEBI:60344"/>
        <label>b562</label>
    </ligand>
    <ligandPart>
        <name>Fe</name>
        <dbReference type="ChEBI" id="CHEBI:18248"/>
    </ligandPart>
</feature>
<feature type="binding site" description="axial binding residue" evidence="2">
    <location>
        <position position="97"/>
    </location>
    <ligand>
        <name>heme b</name>
        <dbReference type="ChEBI" id="CHEBI:60344"/>
        <label>b566</label>
    </ligand>
    <ligandPart>
        <name>Fe</name>
        <dbReference type="ChEBI" id="CHEBI:18248"/>
    </ligandPart>
</feature>
<feature type="binding site" description="axial binding residue" evidence="2">
    <location>
        <position position="182"/>
    </location>
    <ligand>
        <name>heme b</name>
        <dbReference type="ChEBI" id="CHEBI:60344"/>
        <label>b562</label>
    </ligand>
    <ligandPart>
        <name>Fe</name>
        <dbReference type="ChEBI" id="CHEBI:18248"/>
    </ligandPart>
</feature>
<feature type="binding site" description="axial binding residue" evidence="2">
    <location>
        <position position="196"/>
    </location>
    <ligand>
        <name>heme b</name>
        <dbReference type="ChEBI" id="CHEBI:60344"/>
        <label>b566</label>
    </ligand>
    <ligandPart>
        <name>Fe</name>
        <dbReference type="ChEBI" id="CHEBI:18248"/>
    </ligandPart>
</feature>
<feature type="binding site" evidence="2">
    <location>
        <position position="201"/>
    </location>
    <ligand>
        <name>a ubiquinone</name>
        <dbReference type="ChEBI" id="CHEBI:16389"/>
    </ligand>
</feature>
<proteinExistence type="inferred from homology"/>
<geneLocation type="mitochondrion"/>
<name>CYB_CHECR</name>